<accession>D1MX88</accession>
<name>BSC7_ALTBR</name>
<evidence type="ECO:0000250" key="1">
    <source>
        <dbReference type="UniProtKB" id="P04798"/>
    </source>
</evidence>
<evidence type="ECO:0000255" key="2"/>
<evidence type="ECO:0000255" key="3">
    <source>
        <dbReference type="PROSITE-ProRule" id="PRU00498"/>
    </source>
</evidence>
<evidence type="ECO:0000269" key="4">
    <source>
    </source>
</evidence>
<evidence type="ECO:0000269" key="5">
    <source>
    </source>
</evidence>
<evidence type="ECO:0000269" key="6">
    <source>
    </source>
</evidence>
<evidence type="ECO:0000303" key="7">
    <source>
    </source>
</evidence>
<evidence type="ECO:0000305" key="8"/>
<evidence type="ECO:0000305" key="9">
    <source>
    </source>
</evidence>
<gene>
    <name evidence="8" type="primary">bsc7</name>
    <name evidence="7" type="synonym">orf7</name>
</gene>
<organism>
    <name type="scientific">Alternaria brassicicola</name>
    <name type="common">Dark leaf spot agent</name>
    <dbReference type="NCBI Taxonomy" id="29001"/>
    <lineage>
        <taxon>Eukaryota</taxon>
        <taxon>Fungi</taxon>
        <taxon>Dikarya</taxon>
        <taxon>Ascomycota</taxon>
        <taxon>Pezizomycotina</taxon>
        <taxon>Dothideomycetes</taxon>
        <taxon>Pleosporomycetidae</taxon>
        <taxon>Pleosporales</taxon>
        <taxon>Pleosporineae</taxon>
        <taxon>Pleosporaceae</taxon>
        <taxon>Alternaria</taxon>
        <taxon>Alternaria sect. Brassicicola</taxon>
    </lineage>
</organism>
<proteinExistence type="evidence at protein level"/>
<reference key="1">
    <citation type="journal article" date="2009" name="Bioorg. Med. Chem. Lett.">
        <title>Functional analyses of cytochrome P450 genes responsible for the early steps of brassicicene C biosynthesis.</title>
        <authorList>
            <person name="Hashimoto M."/>
            <person name="Higuchi Y."/>
            <person name="Takahashi S."/>
            <person name="Osada H."/>
            <person name="Sakaki T."/>
            <person name="Toyomasu T."/>
            <person name="Sassa T."/>
            <person name="Kato N."/>
            <person name="Dairi T."/>
        </authorList>
    </citation>
    <scope>NUCLEOTIDE SEQUENCE [MRNA]</scope>
    <scope>FUNCTION</scope>
    <scope>CATALYTIC ACTIVITY</scope>
    <scope>PATHWAY</scope>
    <source>
        <strain>ATCC 96836</strain>
    </source>
</reference>
<reference key="2">
    <citation type="journal article" date="2009" name="Bioorg. Med. Chem. Lett.">
        <title>Identification and functional analysis of brassicicene C biosynthetic gene cluster in Alternaria brassicicola.</title>
        <authorList>
            <person name="Minami A."/>
            <person name="Tajima N."/>
            <person name="Higuchi Y."/>
            <person name="Toyomasu T."/>
            <person name="Sassa T."/>
            <person name="Kato N."/>
            <person name="Dairi T."/>
        </authorList>
    </citation>
    <scope>FUNCTION</scope>
</reference>
<reference key="3">
    <citation type="journal article" date="2011" name="J. Am. Chem. Soc.">
        <title>Dioxygenases, key enzymes to determine the aglycon structures of fusicoccin and brassicicene, diterpene compounds produced by fungi.</title>
        <authorList>
            <person name="Ono Y."/>
            <person name="Minami A."/>
            <person name="Noike M."/>
            <person name="Higuchi Y."/>
            <person name="Toyomasu T."/>
            <person name="Sassa T."/>
            <person name="Kato N."/>
            <person name="Dairi T."/>
        </authorList>
    </citation>
    <scope>FUNCTION</scope>
</reference>
<sequence length="495" mass="56346">MASILWTTSLKVLLALIVWIGTTIIYNIYFHPLHSFPGPVLARATRLYSAYIRAVGLSERKSLQWHNQYGGIVRIAPDELSFNTGSAWNDIYGTKSRKSQRLQKDPHFYMGATAPNGEKNMGAVGDEDHSRIRSVLAHAFTDTALHAQESLIRAHVDRLVQRLQDLHGKPTDIVRWMHHHSYDVIAHLCFGQDLDALGSKDWFPPARVVFEGIREGVTLIEVLRFVPFKATVLDILVQAFGKARRENFNASVARAMLRLRLAETTSIDFISYILRVKESAKELTRSELTANVALLIDAGSETTATMLSGCLFYLSLNRTTLEELTHKLREDFRTHDQLSLQNLAKMKLLTYVIQESLRIYPPLPATLPRLTPATGAMINGVLIPPKTRVGMNAFAAYHSTQNFADADMFIPQRWDNTNDRFARDQRHVHRPFSLGSRGCLGKNLAWAEIRLTLACLLWNFDVILEPGQEEWHGKQLTWFIWNKDPLYMRFAPRTK</sequence>
<feature type="chain" id="PRO_0000445454" description="Fusicoccadiene 8-ol C-16 hydroxylase">
    <location>
        <begin position="1"/>
        <end position="495"/>
    </location>
</feature>
<feature type="transmembrane region" description="Helical" evidence="2">
    <location>
        <begin position="12"/>
        <end position="32"/>
    </location>
</feature>
<feature type="binding site" description="axial binding residue" evidence="1">
    <location>
        <position position="439"/>
    </location>
    <ligand>
        <name>heme</name>
        <dbReference type="ChEBI" id="CHEBI:30413"/>
    </ligand>
    <ligandPart>
        <name>Fe</name>
        <dbReference type="ChEBI" id="CHEBI:18248"/>
    </ligandPart>
</feature>
<feature type="glycosylation site" description="N-linked (GlcNAc...) asparagine" evidence="3">
    <location>
        <position position="249"/>
    </location>
</feature>
<feature type="glycosylation site" description="N-linked (GlcNAc...) asparagine" evidence="3">
    <location>
        <position position="317"/>
    </location>
</feature>
<keyword id="KW-0325">Glycoprotein</keyword>
<keyword id="KW-0349">Heme</keyword>
<keyword id="KW-0408">Iron</keyword>
<keyword id="KW-0472">Membrane</keyword>
<keyword id="KW-0479">Metal-binding</keyword>
<keyword id="KW-0503">Monooxygenase</keyword>
<keyword id="KW-0560">Oxidoreductase</keyword>
<keyword id="KW-0812">Transmembrane</keyword>
<keyword id="KW-1133">Transmembrane helix</keyword>
<protein>
    <recommendedName>
        <fullName evidence="7">Fusicoccadiene 8-ol C-16 hydroxylase</fullName>
        <ecNumber evidence="5">1.-.-.-</ecNumber>
    </recommendedName>
    <alternativeName>
        <fullName evidence="7">Brassicicene C biosynthetic gene cluster protein 7</fullName>
    </alternativeName>
    <alternativeName>
        <fullName evidence="7">Cytochrome P450 monooxygenase bsc7</fullName>
    </alternativeName>
</protein>
<dbReference type="EC" id="1.-.-.-" evidence="5"/>
<dbReference type="EMBL" id="AB506081">
    <property type="protein sequence ID" value="BAI52803.1"/>
    <property type="molecule type" value="mRNA"/>
</dbReference>
<dbReference type="SMR" id="D1MX88"/>
<dbReference type="GlyCosmos" id="D1MX88">
    <property type="glycosylation" value="2 sites, No reported glycans"/>
</dbReference>
<dbReference type="BioCyc" id="MetaCyc:MONOMER-18719"/>
<dbReference type="GO" id="GO:0016020">
    <property type="term" value="C:membrane"/>
    <property type="evidence" value="ECO:0007669"/>
    <property type="project" value="UniProtKB-SubCell"/>
</dbReference>
<dbReference type="GO" id="GO:0020037">
    <property type="term" value="F:heme binding"/>
    <property type="evidence" value="ECO:0007669"/>
    <property type="project" value="InterPro"/>
</dbReference>
<dbReference type="GO" id="GO:0005506">
    <property type="term" value="F:iron ion binding"/>
    <property type="evidence" value="ECO:0007669"/>
    <property type="project" value="InterPro"/>
</dbReference>
<dbReference type="GO" id="GO:0004497">
    <property type="term" value="F:monooxygenase activity"/>
    <property type="evidence" value="ECO:0007669"/>
    <property type="project" value="UniProtKB-KW"/>
</dbReference>
<dbReference type="GO" id="GO:0016705">
    <property type="term" value="F:oxidoreductase activity, acting on paired donors, with incorporation or reduction of molecular oxygen"/>
    <property type="evidence" value="ECO:0007669"/>
    <property type="project" value="InterPro"/>
</dbReference>
<dbReference type="GO" id="GO:0009058">
    <property type="term" value="P:biosynthetic process"/>
    <property type="evidence" value="ECO:0007669"/>
    <property type="project" value="UniProtKB-ARBA"/>
</dbReference>
<dbReference type="CDD" id="cd11058">
    <property type="entry name" value="CYP60B-like"/>
    <property type="match status" value="1"/>
</dbReference>
<dbReference type="Gene3D" id="1.10.630.10">
    <property type="entry name" value="Cytochrome P450"/>
    <property type="match status" value="1"/>
</dbReference>
<dbReference type="InterPro" id="IPR001128">
    <property type="entry name" value="Cyt_P450"/>
</dbReference>
<dbReference type="InterPro" id="IPR017972">
    <property type="entry name" value="Cyt_P450_CS"/>
</dbReference>
<dbReference type="InterPro" id="IPR002401">
    <property type="entry name" value="Cyt_P450_E_grp-I"/>
</dbReference>
<dbReference type="InterPro" id="IPR036396">
    <property type="entry name" value="Cyt_P450_sf"/>
</dbReference>
<dbReference type="InterPro" id="IPR050121">
    <property type="entry name" value="Cytochrome_P450_monoxygenase"/>
</dbReference>
<dbReference type="PANTHER" id="PTHR24305">
    <property type="entry name" value="CYTOCHROME P450"/>
    <property type="match status" value="1"/>
</dbReference>
<dbReference type="PANTHER" id="PTHR24305:SF210">
    <property type="entry name" value="CYTOCHROME P450 MONOOXYGENASE ASQL-RELATED"/>
    <property type="match status" value="1"/>
</dbReference>
<dbReference type="Pfam" id="PF00067">
    <property type="entry name" value="p450"/>
    <property type="match status" value="1"/>
</dbReference>
<dbReference type="PRINTS" id="PR00463">
    <property type="entry name" value="EP450I"/>
</dbReference>
<dbReference type="PRINTS" id="PR00385">
    <property type="entry name" value="P450"/>
</dbReference>
<dbReference type="SUPFAM" id="SSF48264">
    <property type="entry name" value="Cytochrome P450"/>
    <property type="match status" value="1"/>
</dbReference>
<dbReference type="PROSITE" id="PS00086">
    <property type="entry name" value="CYTOCHROME_P450"/>
    <property type="match status" value="1"/>
</dbReference>
<comment type="function">
    <text evidence="4 5 6 9">Cytochrome P450 monooxygenase; part of the gene cluster that mediates the biosynthesis of the diterpene glucoside brassicicene C (PubMed:19097780). In the first step of the brassicicene C biosynthesis, the bifunctional diterpene synthase bsc8 that possesses both prenyl transferase and terpene cyclase activity, converts isopentenyl diphosphate and dimethylallyl diphosphate into geranylgeranyl diphosphate (GGDP) that is further converted into fusicocca-2,10(14)-diene, the first precursor for brassicicene C (PubMed:19097780). Fusicocca-2,10(14)-diene is then substrate of cytochrome P450 monooxygenase bsc1 for hydroxylation at the C-8 position (PubMed:19700326). Oxidation at C-16 position to aldehyde is then catalyzed by the cytochrome P450 monooyxygenase bsc7, yielding fusicocca-2,10(14)-diene-8-beta,16-diol (PubMed:19700326). Follows the isomerization of the double bond and reduction of aldehyde to alcohol catalyzed by the short-chain dehydrogenase/reductase bsc3 to yield the diol compound fusicocca-1,10(14)-diene-8 beta,16-diol (Probable). The next step is the oxidation at the C-3 position of fusicocca-2,10(14)-diene-8-beta,16-diol catalyzed by the alpha-ketoglutarate dependent dioxygenase bsc9, to produce a triol compound (PubMed:21299202). Methylation of the hydroxy group at position 16 is performed by the methyltransferase bsc6 (PubMed:19097780). 16-O-methylation is followed by oxidation at the C-13 position to ketone and an alkyl shift of the methyl group leads to brassicicene C (Probable). Although the probable acetyltransferase bsc4 is included in the gene cluster, no acetylation reactions are necessary for brassicicene C biosynthesis. However, the fact that brassicicene E, which is a structurally related compound having an acetoxy group at position 12, was previously isolated from another strain of A.brassicicola suggests that the ATCC 96836 strain might also produce a small amount of brassicicene E (Probable).</text>
</comment>
<comment type="cofactor">
    <cofactor evidence="1">
        <name>heme</name>
        <dbReference type="ChEBI" id="CHEBI:30413"/>
    </cofactor>
</comment>
<comment type="pathway">
    <text evidence="5">Mycotoxin biosynthesis.</text>
</comment>
<comment type="subcellular location">
    <subcellularLocation>
        <location evidence="2">Membrane</location>
        <topology evidence="2">Single-pass membrane protein</topology>
    </subcellularLocation>
</comment>
<comment type="similarity">
    <text evidence="8">Belongs to the cytochrome P450 family.</text>
</comment>